<feature type="chain" id="PRO_0000263778" description="Translation initiation factor IF-1 1">
    <location>
        <begin position="1"/>
        <end position="72"/>
    </location>
</feature>
<feature type="domain" description="S1-like" evidence="1">
    <location>
        <begin position="1"/>
        <end position="72"/>
    </location>
</feature>
<keyword id="KW-0963">Cytoplasm</keyword>
<keyword id="KW-0396">Initiation factor</keyword>
<keyword id="KW-0648">Protein biosynthesis</keyword>
<keyword id="KW-1185">Reference proteome</keyword>
<keyword id="KW-0694">RNA-binding</keyword>
<keyword id="KW-0699">rRNA-binding</keyword>
<name>IF11_PARXL</name>
<protein>
    <recommendedName>
        <fullName evidence="1">Translation initiation factor IF-1 1</fullName>
    </recommendedName>
</protein>
<reference key="1">
    <citation type="journal article" date="2006" name="Proc. Natl. Acad. Sci. U.S.A.">
        <title>Burkholderia xenovorans LB400 harbors a multi-replicon, 9.73-Mbp genome shaped for versatility.</title>
        <authorList>
            <person name="Chain P.S.G."/>
            <person name="Denef V.J."/>
            <person name="Konstantinidis K.T."/>
            <person name="Vergez L.M."/>
            <person name="Agullo L."/>
            <person name="Reyes V.L."/>
            <person name="Hauser L."/>
            <person name="Cordova M."/>
            <person name="Gomez L."/>
            <person name="Gonzalez M."/>
            <person name="Land M."/>
            <person name="Lao V."/>
            <person name="Larimer F."/>
            <person name="LiPuma J.J."/>
            <person name="Mahenthiralingam E."/>
            <person name="Malfatti S.A."/>
            <person name="Marx C.J."/>
            <person name="Parnell J.J."/>
            <person name="Ramette A."/>
            <person name="Richardson P."/>
            <person name="Seeger M."/>
            <person name="Smith D."/>
            <person name="Spilker T."/>
            <person name="Sul W.J."/>
            <person name="Tsoi T.V."/>
            <person name="Ulrich L.E."/>
            <person name="Zhulin I.B."/>
            <person name="Tiedje J.M."/>
        </authorList>
    </citation>
    <scope>NUCLEOTIDE SEQUENCE [LARGE SCALE GENOMIC DNA]</scope>
    <source>
        <strain>LB400</strain>
    </source>
</reference>
<proteinExistence type="inferred from homology"/>
<sequence>MAKDDVIQMQGEVIENLPNATFRVKLENGHVVLGHISGKMRMHYIRILPGDKVTVELTPYDLSRARIVFRAK</sequence>
<accession>Q13TJ1</accession>
<comment type="function">
    <text evidence="1">One of the essential components for the initiation of protein synthesis. Stabilizes the binding of IF-2 and IF-3 on the 30S subunit to which N-formylmethionyl-tRNA(fMet) subsequently binds. Helps modulate mRNA selection, yielding the 30S pre-initiation complex (PIC). Upon addition of the 50S ribosomal subunit IF-1, IF-2 and IF-3 are released leaving the mature 70S translation initiation complex.</text>
</comment>
<comment type="subunit">
    <text evidence="1">Component of the 30S ribosomal translation pre-initiation complex which assembles on the 30S ribosome in the order IF-2 and IF-3, IF-1 and N-formylmethionyl-tRNA(fMet); mRNA recruitment can occur at any time during PIC assembly.</text>
</comment>
<comment type="subcellular location">
    <subcellularLocation>
        <location evidence="1">Cytoplasm</location>
    </subcellularLocation>
</comment>
<comment type="similarity">
    <text evidence="1">Belongs to the IF-1 family.</text>
</comment>
<dbReference type="EMBL" id="CP000270">
    <property type="protein sequence ID" value="ABE32598.1"/>
    <property type="molecule type" value="Genomic_DNA"/>
</dbReference>
<dbReference type="SMR" id="Q13TJ1"/>
<dbReference type="STRING" id="266265.Bxe_A0335"/>
<dbReference type="KEGG" id="bxb:DR64_2505"/>
<dbReference type="KEGG" id="bxe:Bxe_A0335"/>
<dbReference type="eggNOG" id="COG0361">
    <property type="taxonomic scope" value="Bacteria"/>
</dbReference>
<dbReference type="OrthoDB" id="9803250at2"/>
<dbReference type="Proteomes" id="UP000001817">
    <property type="component" value="Chromosome 1"/>
</dbReference>
<dbReference type="GO" id="GO:0005829">
    <property type="term" value="C:cytosol"/>
    <property type="evidence" value="ECO:0007669"/>
    <property type="project" value="TreeGrafter"/>
</dbReference>
<dbReference type="GO" id="GO:0043022">
    <property type="term" value="F:ribosome binding"/>
    <property type="evidence" value="ECO:0007669"/>
    <property type="project" value="UniProtKB-UniRule"/>
</dbReference>
<dbReference type="GO" id="GO:0019843">
    <property type="term" value="F:rRNA binding"/>
    <property type="evidence" value="ECO:0007669"/>
    <property type="project" value="UniProtKB-UniRule"/>
</dbReference>
<dbReference type="GO" id="GO:0003743">
    <property type="term" value="F:translation initiation factor activity"/>
    <property type="evidence" value="ECO:0007669"/>
    <property type="project" value="UniProtKB-UniRule"/>
</dbReference>
<dbReference type="CDD" id="cd04451">
    <property type="entry name" value="S1_IF1"/>
    <property type="match status" value="1"/>
</dbReference>
<dbReference type="FunFam" id="2.40.50.140:FF:000002">
    <property type="entry name" value="Translation initiation factor IF-1"/>
    <property type="match status" value="1"/>
</dbReference>
<dbReference type="Gene3D" id="2.40.50.140">
    <property type="entry name" value="Nucleic acid-binding proteins"/>
    <property type="match status" value="1"/>
</dbReference>
<dbReference type="HAMAP" id="MF_00075">
    <property type="entry name" value="IF_1"/>
    <property type="match status" value="1"/>
</dbReference>
<dbReference type="InterPro" id="IPR012340">
    <property type="entry name" value="NA-bd_OB-fold"/>
</dbReference>
<dbReference type="InterPro" id="IPR006196">
    <property type="entry name" value="RNA-binding_domain_S1_IF1"/>
</dbReference>
<dbReference type="InterPro" id="IPR003029">
    <property type="entry name" value="S1_domain"/>
</dbReference>
<dbReference type="InterPro" id="IPR004368">
    <property type="entry name" value="TIF_IF1"/>
</dbReference>
<dbReference type="NCBIfam" id="TIGR00008">
    <property type="entry name" value="infA"/>
    <property type="match status" value="1"/>
</dbReference>
<dbReference type="PANTHER" id="PTHR33370">
    <property type="entry name" value="TRANSLATION INITIATION FACTOR IF-1, CHLOROPLASTIC"/>
    <property type="match status" value="1"/>
</dbReference>
<dbReference type="PANTHER" id="PTHR33370:SF1">
    <property type="entry name" value="TRANSLATION INITIATION FACTOR IF-1, CHLOROPLASTIC"/>
    <property type="match status" value="1"/>
</dbReference>
<dbReference type="Pfam" id="PF01176">
    <property type="entry name" value="eIF-1a"/>
    <property type="match status" value="1"/>
</dbReference>
<dbReference type="SMART" id="SM00316">
    <property type="entry name" value="S1"/>
    <property type="match status" value="1"/>
</dbReference>
<dbReference type="SUPFAM" id="SSF50249">
    <property type="entry name" value="Nucleic acid-binding proteins"/>
    <property type="match status" value="1"/>
</dbReference>
<dbReference type="PROSITE" id="PS50832">
    <property type="entry name" value="S1_IF1_TYPE"/>
    <property type="match status" value="1"/>
</dbReference>
<evidence type="ECO:0000255" key="1">
    <source>
        <dbReference type="HAMAP-Rule" id="MF_00075"/>
    </source>
</evidence>
<gene>
    <name evidence="1" type="primary">infA1</name>
    <name type="ordered locus">Bxeno_A4060</name>
    <name type="ORF">Bxe_A0335</name>
</gene>
<organism>
    <name type="scientific">Paraburkholderia xenovorans (strain LB400)</name>
    <dbReference type="NCBI Taxonomy" id="266265"/>
    <lineage>
        <taxon>Bacteria</taxon>
        <taxon>Pseudomonadati</taxon>
        <taxon>Pseudomonadota</taxon>
        <taxon>Betaproteobacteria</taxon>
        <taxon>Burkholderiales</taxon>
        <taxon>Burkholderiaceae</taxon>
        <taxon>Paraburkholderia</taxon>
    </lineage>
</organism>